<keyword id="KW-1015">Disulfide bond</keyword>
<keyword id="KW-0372">Hormone</keyword>
<keyword id="KW-1185">Reference proteome</keyword>
<keyword id="KW-0964">Secreted</keyword>
<keyword id="KW-0732">Signal</keyword>
<protein>
    <recommendedName>
        <fullName>Protein RALF-like 34</fullName>
    </recommendedName>
</protein>
<reference key="1">
    <citation type="journal article" date="2000" name="DNA Res.">
        <title>Structural analysis of Arabidopsis thaliana chromosome 5. X. Sequence features of the regions of 3,076,755 bp covered by sixty P1 and TAC clones.</title>
        <authorList>
            <person name="Sato S."/>
            <person name="Nakamura Y."/>
            <person name="Kaneko T."/>
            <person name="Katoh T."/>
            <person name="Asamizu E."/>
            <person name="Kotani H."/>
            <person name="Tabata S."/>
        </authorList>
    </citation>
    <scope>NUCLEOTIDE SEQUENCE [LARGE SCALE GENOMIC DNA]</scope>
    <source>
        <strain>cv. Columbia</strain>
    </source>
</reference>
<reference key="2">
    <citation type="journal article" date="2017" name="Plant J.">
        <title>Araport11: a complete reannotation of the Arabidopsis thaliana reference genome.</title>
        <authorList>
            <person name="Cheng C.Y."/>
            <person name="Krishnakumar V."/>
            <person name="Chan A.P."/>
            <person name="Thibaud-Nissen F."/>
            <person name="Schobel S."/>
            <person name="Town C.D."/>
        </authorList>
    </citation>
    <scope>GENOME REANNOTATION</scope>
    <source>
        <strain>cv. Columbia</strain>
    </source>
</reference>
<reference key="3">
    <citation type="journal article" date="2003" name="Science">
        <title>Empirical analysis of transcriptional activity in the Arabidopsis genome.</title>
        <authorList>
            <person name="Yamada K."/>
            <person name="Lim J."/>
            <person name="Dale J.M."/>
            <person name="Chen H."/>
            <person name="Shinn P."/>
            <person name="Palm C.J."/>
            <person name="Southwick A.M."/>
            <person name="Wu H.C."/>
            <person name="Kim C.J."/>
            <person name="Nguyen M."/>
            <person name="Pham P.K."/>
            <person name="Cheuk R.F."/>
            <person name="Karlin-Newmann G."/>
            <person name="Liu S.X."/>
            <person name="Lam B."/>
            <person name="Sakano H."/>
            <person name="Wu T."/>
            <person name="Yu G."/>
            <person name="Miranda M."/>
            <person name="Quach H.L."/>
            <person name="Tripp M."/>
            <person name="Chang C.H."/>
            <person name="Lee J.M."/>
            <person name="Toriumi M.J."/>
            <person name="Chan M.M."/>
            <person name="Tang C.C."/>
            <person name="Onodera C.S."/>
            <person name="Deng J.M."/>
            <person name="Akiyama K."/>
            <person name="Ansari Y."/>
            <person name="Arakawa T."/>
            <person name="Banh J."/>
            <person name="Banno F."/>
            <person name="Bowser L."/>
            <person name="Brooks S.Y."/>
            <person name="Carninci P."/>
            <person name="Chao Q."/>
            <person name="Choy N."/>
            <person name="Enju A."/>
            <person name="Goldsmith A.D."/>
            <person name="Gurjal M."/>
            <person name="Hansen N.F."/>
            <person name="Hayashizaki Y."/>
            <person name="Johnson-Hopson C."/>
            <person name="Hsuan V.W."/>
            <person name="Iida K."/>
            <person name="Karnes M."/>
            <person name="Khan S."/>
            <person name="Koesema E."/>
            <person name="Ishida J."/>
            <person name="Jiang P.X."/>
            <person name="Jones T."/>
            <person name="Kawai J."/>
            <person name="Kamiya A."/>
            <person name="Meyers C."/>
            <person name="Nakajima M."/>
            <person name="Narusaka M."/>
            <person name="Seki M."/>
            <person name="Sakurai T."/>
            <person name="Satou M."/>
            <person name="Tamse R."/>
            <person name="Vaysberg M."/>
            <person name="Wallender E.K."/>
            <person name="Wong C."/>
            <person name="Yamamura Y."/>
            <person name="Yuan S."/>
            <person name="Shinozaki K."/>
            <person name="Davis R.W."/>
            <person name="Theologis A."/>
            <person name="Ecker J.R."/>
        </authorList>
    </citation>
    <scope>NUCLEOTIDE SEQUENCE [LARGE SCALE MRNA]</scope>
    <source>
        <strain>cv. Columbia</strain>
    </source>
</reference>
<reference key="4">
    <citation type="submission" date="2002-03" db="EMBL/GenBank/DDBJ databases">
        <title>Full-length cDNA from Arabidopsis thaliana.</title>
        <authorList>
            <person name="Brover V.V."/>
            <person name="Troukhan M.E."/>
            <person name="Alexandrov N.A."/>
            <person name="Lu Y.-P."/>
            <person name="Flavell R.B."/>
            <person name="Feldmann K.A."/>
        </authorList>
    </citation>
    <scope>NUCLEOTIDE SEQUENCE [LARGE SCALE MRNA]</scope>
    <source>
        <strain>cv. Columbia</strain>
    </source>
</reference>
<reference key="5">
    <citation type="journal article" date="2002" name="In Silico Biol.">
        <title>Peptomics, identification of novel cationic Arabidopsis peptides with conserved sequence motifs.</title>
        <authorList>
            <person name="Olsen A.N."/>
            <person name="Mundy J."/>
            <person name="Skriver K."/>
        </authorList>
    </citation>
    <scope>TISSUE SPECIFICITY</scope>
    <scope>INDUCTION BY SENESCENCE</scope>
    <scope>GENE FAMILY</scope>
    <scope>NOMENCLATURE</scope>
</reference>
<name>RLF34_ARATH</name>
<dbReference type="EMBL" id="AB020742">
    <property type="protein sequence ID" value="BAB10941.1"/>
    <property type="molecule type" value="Genomic_DNA"/>
</dbReference>
<dbReference type="EMBL" id="CP002688">
    <property type="protein sequence ID" value="AED98297.1"/>
    <property type="molecule type" value="Genomic_DNA"/>
</dbReference>
<dbReference type="EMBL" id="AF370212">
    <property type="protein sequence ID" value="AAK44027.1"/>
    <property type="molecule type" value="mRNA"/>
</dbReference>
<dbReference type="EMBL" id="AY133871">
    <property type="protein sequence ID" value="AAM91805.1"/>
    <property type="molecule type" value="mRNA"/>
</dbReference>
<dbReference type="EMBL" id="AY088253">
    <property type="protein sequence ID" value="AAM65793.1"/>
    <property type="molecule type" value="mRNA"/>
</dbReference>
<dbReference type="RefSeq" id="NP_201508.1">
    <property type="nucleotide sequence ID" value="NM_126107.4"/>
</dbReference>
<dbReference type="SMR" id="Q9FHA6"/>
<dbReference type="FunCoup" id="Q9FHA6">
    <property type="interactions" value="303"/>
</dbReference>
<dbReference type="STRING" id="3702.Q9FHA6"/>
<dbReference type="PaxDb" id="3702-AT5G67070.1"/>
<dbReference type="ProteomicsDB" id="228182"/>
<dbReference type="EnsemblPlants" id="AT5G67070.1">
    <property type="protein sequence ID" value="AT5G67070.1"/>
    <property type="gene ID" value="AT5G67070"/>
</dbReference>
<dbReference type="GeneID" id="836842"/>
<dbReference type="Gramene" id="AT5G67070.1">
    <property type="protein sequence ID" value="AT5G67070.1"/>
    <property type="gene ID" value="AT5G67070"/>
</dbReference>
<dbReference type="KEGG" id="ath:AT5G67070"/>
<dbReference type="Araport" id="AT5G67070"/>
<dbReference type="TAIR" id="AT5G67070">
    <property type="gene designation" value="RALFL34"/>
</dbReference>
<dbReference type="eggNOG" id="ENOG502S4T2">
    <property type="taxonomic scope" value="Eukaryota"/>
</dbReference>
<dbReference type="HOGENOM" id="CLU_127895_2_0_1"/>
<dbReference type="InParanoid" id="Q9FHA6"/>
<dbReference type="OMA" id="TRTHYYI"/>
<dbReference type="OrthoDB" id="1931174at2759"/>
<dbReference type="PhylomeDB" id="Q9FHA6"/>
<dbReference type="PRO" id="PR:Q9FHA6"/>
<dbReference type="Proteomes" id="UP000006548">
    <property type="component" value="Chromosome 5"/>
</dbReference>
<dbReference type="ExpressionAtlas" id="Q9FHA6">
    <property type="expression patterns" value="baseline and differential"/>
</dbReference>
<dbReference type="GO" id="GO:0048046">
    <property type="term" value="C:apoplast"/>
    <property type="evidence" value="ECO:0000250"/>
    <property type="project" value="TAIR"/>
</dbReference>
<dbReference type="GO" id="GO:0005179">
    <property type="term" value="F:hormone activity"/>
    <property type="evidence" value="ECO:0000250"/>
    <property type="project" value="UniProtKB"/>
</dbReference>
<dbReference type="GO" id="GO:0019722">
    <property type="term" value="P:calcium-mediated signaling"/>
    <property type="evidence" value="ECO:0000250"/>
    <property type="project" value="UniProtKB"/>
</dbReference>
<dbReference type="GO" id="GO:0007267">
    <property type="term" value="P:cell-cell signaling"/>
    <property type="evidence" value="ECO:0000250"/>
    <property type="project" value="TAIR"/>
</dbReference>
<dbReference type="GO" id="GO:0040008">
    <property type="term" value="P:regulation of growth"/>
    <property type="evidence" value="ECO:0007669"/>
    <property type="project" value="UniProtKB-ARBA"/>
</dbReference>
<dbReference type="InterPro" id="IPR008801">
    <property type="entry name" value="RALF"/>
</dbReference>
<dbReference type="PANTHER" id="PTHR33136:SF6">
    <property type="entry name" value="PROTEIN RALF-LIKE 34"/>
    <property type="match status" value="1"/>
</dbReference>
<dbReference type="PANTHER" id="PTHR33136">
    <property type="entry name" value="RAPID ALKALINIZATION FACTOR-LIKE"/>
    <property type="match status" value="1"/>
</dbReference>
<dbReference type="Pfam" id="PF05498">
    <property type="entry name" value="RALF"/>
    <property type="match status" value="1"/>
</dbReference>
<gene>
    <name type="primary">RALFL34</name>
    <name type="ordered locus">At5g67070</name>
    <name type="ORF">K21H1.3</name>
</gene>
<feature type="signal peptide" evidence="2">
    <location>
        <begin position="1"/>
        <end position="23"/>
    </location>
</feature>
<feature type="propeptide" id="PRO_0000420335" description="Removed in mature form" evidence="1">
    <location>
        <begin position="24"/>
        <end position="76"/>
    </location>
</feature>
<feature type="chain" id="PRO_0000420336" description="Protein RALF-like 34">
    <location>
        <begin position="77"/>
        <end position="129"/>
    </location>
</feature>
<feature type="site" description="Required for proteolytic cleavage" evidence="1">
    <location>
        <begin position="70"/>
        <end position="71"/>
    </location>
</feature>
<feature type="disulfide bond" evidence="1">
    <location>
        <begin position="94"/>
        <end position="107"/>
    </location>
</feature>
<feature type="disulfide bond" evidence="1">
    <location>
        <begin position="121"/>
        <end position="127"/>
    </location>
</feature>
<feature type="sequence conflict" description="In Ref. 4; AAM65793." evidence="4" ref="4">
    <original>R</original>
    <variation>L</variation>
    <location>
        <position position="119"/>
    </location>
</feature>
<organism>
    <name type="scientific">Arabidopsis thaliana</name>
    <name type="common">Mouse-ear cress</name>
    <dbReference type="NCBI Taxonomy" id="3702"/>
    <lineage>
        <taxon>Eukaryota</taxon>
        <taxon>Viridiplantae</taxon>
        <taxon>Streptophyta</taxon>
        <taxon>Embryophyta</taxon>
        <taxon>Tracheophyta</taxon>
        <taxon>Spermatophyta</taxon>
        <taxon>Magnoliopsida</taxon>
        <taxon>eudicotyledons</taxon>
        <taxon>Gunneridae</taxon>
        <taxon>Pentapetalae</taxon>
        <taxon>rosids</taxon>
        <taxon>malvids</taxon>
        <taxon>Brassicales</taxon>
        <taxon>Brassicaceae</taxon>
        <taxon>Camelineae</taxon>
        <taxon>Arabidopsis</taxon>
    </lineage>
</organism>
<comment type="function">
    <text evidence="1">Cell signaling peptide that may regulate plant stress, growth, and development. Mediates a rapid alkalinization of extracellular space by mediating a transient increase in the cytoplasmic Ca(2+) concentration leading to a calcium-dependent signaling events through a cell surface receptor and a concomitant activation of some intracellular mitogen-activated protein kinases (By similarity).</text>
</comment>
<comment type="subcellular location">
    <subcellularLocation>
        <location evidence="1">Secreted</location>
    </subcellularLocation>
</comment>
<comment type="tissue specificity">
    <text evidence="3">Expressed in roots, stems and leaves.</text>
</comment>
<comment type="induction">
    <text evidence="3">Accumulates during senescence.</text>
</comment>
<comment type="PTM">
    <text evidence="1">Proteolytically cleaved, probably by S1P, a subtilisin-like serine protease (subtilase).</text>
</comment>
<comment type="similarity">
    <text evidence="4">Belongs to the plant rapid alkalinization factor (RALF) family.</text>
</comment>
<accession>Q9FHA6</accession>
<accession>Q8L9S6</accession>
<evidence type="ECO:0000250" key="1"/>
<evidence type="ECO:0000255" key="2"/>
<evidence type="ECO:0000269" key="3">
    <source>
    </source>
</evidence>
<evidence type="ECO:0000305" key="4"/>
<sequence length="129" mass="14729">MAASSLNLLLILSLLTFISLQRSESLSDNPSLTLLPDGFDWPISHSDEFDIIDGEESFEVTEEDDGVTDRRSLYWRRTKYYISYGALSANRVPCPPRSGRSYYTHNCFRARGPVHPYSRGCSSITRCRR</sequence>
<proteinExistence type="evidence at transcript level"/>